<proteinExistence type="inferred from homology"/>
<protein>
    <recommendedName>
        <fullName evidence="1">UvrABC system protein C</fullName>
        <shortName evidence="1">Protein UvrC</shortName>
    </recommendedName>
    <alternativeName>
        <fullName evidence="1">Excinuclease ABC subunit C</fullName>
    </alternativeName>
</protein>
<dbReference type="EMBL" id="CP000538">
    <property type="protein sequence ID" value="EAQ72503.1"/>
    <property type="molecule type" value="Genomic_DNA"/>
</dbReference>
<dbReference type="RefSeq" id="WP_002869075.1">
    <property type="nucleotide sequence ID" value="NC_008787.1"/>
</dbReference>
<dbReference type="SMR" id="A1W0N0"/>
<dbReference type="KEGG" id="cjj:CJJ81176_1261"/>
<dbReference type="eggNOG" id="COG0322">
    <property type="taxonomic scope" value="Bacteria"/>
</dbReference>
<dbReference type="HOGENOM" id="CLU_014841_3_2_7"/>
<dbReference type="Proteomes" id="UP000000646">
    <property type="component" value="Chromosome"/>
</dbReference>
<dbReference type="GO" id="GO:0005737">
    <property type="term" value="C:cytoplasm"/>
    <property type="evidence" value="ECO:0007669"/>
    <property type="project" value="UniProtKB-SubCell"/>
</dbReference>
<dbReference type="GO" id="GO:0009380">
    <property type="term" value="C:excinuclease repair complex"/>
    <property type="evidence" value="ECO:0007669"/>
    <property type="project" value="InterPro"/>
</dbReference>
<dbReference type="GO" id="GO:0003677">
    <property type="term" value="F:DNA binding"/>
    <property type="evidence" value="ECO:0007669"/>
    <property type="project" value="UniProtKB-UniRule"/>
</dbReference>
<dbReference type="GO" id="GO:0009381">
    <property type="term" value="F:excinuclease ABC activity"/>
    <property type="evidence" value="ECO:0007669"/>
    <property type="project" value="UniProtKB-UniRule"/>
</dbReference>
<dbReference type="GO" id="GO:0006289">
    <property type="term" value="P:nucleotide-excision repair"/>
    <property type="evidence" value="ECO:0007669"/>
    <property type="project" value="UniProtKB-UniRule"/>
</dbReference>
<dbReference type="GO" id="GO:0009432">
    <property type="term" value="P:SOS response"/>
    <property type="evidence" value="ECO:0007669"/>
    <property type="project" value="UniProtKB-UniRule"/>
</dbReference>
<dbReference type="CDD" id="cd10434">
    <property type="entry name" value="GIY-YIG_UvrC_Cho"/>
    <property type="match status" value="1"/>
</dbReference>
<dbReference type="FunFam" id="3.40.1440.10:FF:000001">
    <property type="entry name" value="UvrABC system protein C"/>
    <property type="match status" value="1"/>
</dbReference>
<dbReference type="Gene3D" id="3.40.1440.10">
    <property type="entry name" value="GIY-YIG endonuclease"/>
    <property type="match status" value="1"/>
</dbReference>
<dbReference type="Gene3D" id="4.10.860.10">
    <property type="entry name" value="UVR domain"/>
    <property type="match status" value="1"/>
</dbReference>
<dbReference type="Gene3D" id="3.30.420.340">
    <property type="entry name" value="UvrC, RNAse H endonuclease domain"/>
    <property type="match status" value="1"/>
</dbReference>
<dbReference type="HAMAP" id="MF_00203">
    <property type="entry name" value="UvrC"/>
    <property type="match status" value="1"/>
</dbReference>
<dbReference type="InterPro" id="IPR000305">
    <property type="entry name" value="GIY-YIG_endonuc"/>
</dbReference>
<dbReference type="InterPro" id="IPR035901">
    <property type="entry name" value="GIY-YIG_endonuc_sf"/>
</dbReference>
<dbReference type="InterPro" id="IPR047296">
    <property type="entry name" value="GIY-YIG_UvrC_Cho"/>
</dbReference>
<dbReference type="InterPro" id="IPR010994">
    <property type="entry name" value="RuvA_2-like"/>
</dbReference>
<dbReference type="InterPro" id="IPR001943">
    <property type="entry name" value="UVR_dom"/>
</dbReference>
<dbReference type="InterPro" id="IPR036876">
    <property type="entry name" value="UVR_dom_sf"/>
</dbReference>
<dbReference type="InterPro" id="IPR050066">
    <property type="entry name" value="UvrABC_protein_C"/>
</dbReference>
<dbReference type="InterPro" id="IPR004791">
    <property type="entry name" value="UvrC"/>
</dbReference>
<dbReference type="InterPro" id="IPR001162">
    <property type="entry name" value="UvrC_RNase_H_dom"/>
</dbReference>
<dbReference type="InterPro" id="IPR038476">
    <property type="entry name" value="UvrC_RNase_H_dom_sf"/>
</dbReference>
<dbReference type="NCBIfam" id="TIGR00194">
    <property type="entry name" value="uvrC"/>
    <property type="match status" value="1"/>
</dbReference>
<dbReference type="PANTHER" id="PTHR30562:SF1">
    <property type="entry name" value="UVRABC SYSTEM PROTEIN C"/>
    <property type="match status" value="1"/>
</dbReference>
<dbReference type="PANTHER" id="PTHR30562">
    <property type="entry name" value="UVRC/OXIDOREDUCTASE"/>
    <property type="match status" value="1"/>
</dbReference>
<dbReference type="Pfam" id="PF01541">
    <property type="entry name" value="GIY-YIG"/>
    <property type="match status" value="1"/>
</dbReference>
<dbReference type="Pfam" id="PF02151">
    <property type="entry name" value="UVR"/>
    <property type="match status" value="1"/>
</dbReference>
<dbReference type="Pfam" id="PF22920">
    <property type="entry name" value="UvrC_RNaseH"/>
    <property type="match status" value="1"/>
</dbReference>
<dbReference type="Pfam" id="PF08459">
    <property type="entry name" value="UvrC_RNaseH_dom"/>
    <property type="match status" value="1"/>
</dbReference>
<dbReference type="SMART" id="SM00465">
    <property type="entry name" value="GIYc"/>
    <property type="match status" value="1"/>
</dbReference>
<dbReference type="SUPFAM" id="SSF46600">
    <property type="entry name" value="C-terminal UvrC-binding domain of UvrB"/>
    <property type="match status" value="1"/>
</dbReference>
<dbReference type="SUPFAM" id="SSF82771">
    <property type="entry name" value="GIY-YIG endonuclease"/>
    <property type="match status" value="1"/>
</dbReference>
<dbReference type="SUPFAM" id="SSF47781">
    <property type="entry name" value="RuvA domain 2-like"/>
    <property type="match status" value="1"/>
</dbReference>
<dbReference type="PROSITE" id="PS50164">
    <property type="entry name" value="GIY_YIG"/>
    <property type="match status" value="1"/>
</dbReference>
<dbReference type="PROSITE" id="PS50151">
    <property type="entry name" value="UVR"/>
    <property type="match status" value="1"/>
</dbReference>
<dbReference type="PROSITE" id="PS50165">
    <property type="entry name" value="UVRC"/>
    <property type="match status" value="1"/>
</dbReference>
<accession>A1W0N0</accession>
<name>UVRC_CAMJJ</name>
<comment type="function">
    <text evidence="1">The UvrABC repair system catalyzes the recognition and processing of DNA lesions. UvrC both incises the 5' and 3' sides of the lesion. The N-terminal half is responsible for the 3' incision and the C-terminal half is responsible for the 5' incision.</text>
</comment>
<comment type="subunit">
    <text evidence="1">Interacts with UvrB in an incision complex.</text>
</comment>
<comment type="subcellular location">
    <subcellularLocation>
        <location evidence="1">Cytoplasm</location>
    </subcellularLocation>
</comment>
<comment type="similarity">
    <text evidence="1">Belongs to the UvrC family.</text>
</comment>
<feature type="chain" id="PRO_1000077767" description="UvrABC system protein C">
    <location>
        <begin position="1"/>
        <end position="600"/>
    </location>
</feature>
<feature type="domain" description="GIY-YIG" evidence="1">
    <location>
        <begin position="15"/>
        <end position="100"/>
    </location>
</feature>
<feature type="domain" description="UVR" evidence="1">
    <location>
        <begin position="203"/>
        <end position="238"/>
    </location>
</feature>
<keyword id="KW-0963">Cytoplasm</keyword>
<keyword id="KW-0227">DNA damage</keyword>
<keyword id="KW-0228">DNA excision</keyword>
<keyword id="KW-0234">DNA repair</keyword>
<keyword id="KW-0267">Excision nuclease</keyword>
<keyword id="KW-0742">SOS response</keyword>
<sequence>MTKENLENELKTLPNSAGVYQYFNQEGKLLYVGKAKNLKNRVKSYFAFTPNLHANPRNSLRIQKMIEETVHLEFITTNSEADALILENSFIKQLHPKYNILLRDDKTYPYIYVNFEEEFPRFEITRKLVKKSKIKYFGPFFKGARELLDALYLYYPLKQKASCKSPCIFYQISRCLAPCDKRISKEKYLEILDEAMHALLNPSILIKNLEKQMLVLAQNENYEEAAKVRDQIVTIKDLEVKVEMDVAKLEDFEVFALAFEDSMLSTLRFVVQNGKIISANSKITPIKNDIQWDQNEIYKQLILENFSMDIPLLANVIYVYEEFEDRVLLEEILSQRFDKKISIKIPKIGEKRRICDLAFQNALLNIEKEQKNHDFTIQKELKFYFELENLPNDIEIFDNSHLQGVANVGAMVTYRINSWDKSKYRKFHLKHKNDYDQMREVLTRRALDFDKIPPPDLWLIDGGKVLLDLAKKIIVSSGANVDILAISKEKIDAKAHRAKGGAKDKIHSLKGEFSLSINDKKLQFLQKLRDEAHRFAISFHQNTKKKQDLKSSKLANLGLSSGVIQKLLAYYGNFESIYKADFKDLTMLVGRKAAQKIKEN</sequence>
<gene>
    <name evidence="1" type="primary">uvrC</name>
    <name type="ordered locus">CJJ81176_1261</name>
</gene>
<evidence type="ECO:0000255" key="1">
    <source>
        <dbReference type="HAMAP-Rule" id="MF_00203"/>
    </source>
</evidence>
<organism>
    <name type="scientific">Campylobacter jejuni subsp. jejuni serotype O:23/36 (strain 81-176)</name>
    <dbReference type="NCBI Taxonomy" id="354242"/>
    <lineage>
        <taxon>Bacteria</taxon>
        <taxon>Pseudomonadati</taxon>
        <taxon>Campylobacterota</taxon>
        <taxon>Epsilonproteobacteria</taxon>
        <taxon>Campylobacterales</taxon>
        <taxon>Campylobacteraceae</taxon>
        <taxon>Campylobacter</taxon>
    </lineage>
</organism>
<reference key="1">
    <citation type="submission" date="2006-12" db="EMBL/GenBank/DDBJ databases">
        <authorList>
            <person name="Fouts D.E."/>
            <person name="Nelson K.E."/>
            <person name="Sebastian Y."/>
        </authorList>
    </citation>
    <scope>NUCLEOTIDE SEQUENCE [LARGE SCALE GENOMIC DNA]</scope>
    <source>
        <strain>81-176</strain>
    </source>
</reference>